<sequence>MDDDASMSIRWGGFFESPARNLGLQLMSSVPAERDTKQLLSGSPFLHHQHQQHVPHHHHQPHHPRDCGANGNANGGAMPPPPATEAPPSMPMNFARSDMWMHPQQQQQHHHPREHKALHNLTVGHGSSHIAHHDPVGYGMIPGTHTLQMMQQQTEPQLQPPPPPQQPKEECISSPLIEENVPVIDEPPPPKKRQQGRQPKVPRAKKPKKSAAPREDGAPPNAPAPRRRGPRKNIGMVINGIDLDLSRIPTPICSCTGAPQQCYRWGAGGWQSACCTTTISTYPLPMSTKRRGARIAGRKMSHGAFKKVLEKLAGEGYNLNNPIDLKTFWAKHGTNKFVTIR</sequence>
<dbReference type="EMBL" id="AY569036">
    <property type="protein sequence ID" value="AAS75866.1"/>
    <property type="molecule type" value="Genomic_DNA"/>
</dbReference>
<dbReference type="EMBL" id="AY569037">
    <property type="protein sequence ID" value="AAS75867.1"/>
    <property type="molecule type" value="mRNA"/>
</dbReference>
<dbReference type="EMBL" id="AC078891">
    <property type="protein sequence ID" value="AAK52537.1"/>
    <property type="status" value="ALT_SEQ"/>
    <property type="molecule type" value="Genomic_DNA"/>
</dbReference>
<dbReference type="EMBL" id="DP000086">
    <property type="protein sequence ID" value="AAP51867.1"/>
    <property type="status" value="ALT_SEQ"/>
    <property type="molecule type" value="Genomic_DNA"/>
</dbReference>
<dbReference type="EMBL" id="AP008216">
    <property type="protein sequence ID" value="BAH94736.1"/>
    <property type="status" value="ALT_SEQ"/>
    <property type="molecule type" value="Genomic_DNA"/>
</dbReference>
<dbReference type="EMBL" id="AP014966">
    <property type="protein sequence ID" value="BAT09655.1"/>
    <property type="molecule type" value="Genomic_DNA"/>
</dbReference>
<dbReference type="EMBL" id="AK063643">
    <property type="status" value="NOT_ANNOTATED_CDS"/>
    <property type="molecule type" value="mRNA"/>
</dbReference>
<dbReference type="FunCoup" id="P0DH89">
    <property type="interactions" value="1084"/>
</dbReference>
<dbReference type="PaxDb" id="39947-P0DH89"/>
<dbReference type="EnsemblPlants" id="Os10t0114500-01">
    <property type="protein sequence ID" value="Os10t0114500-01"/>
    <property type="gene ID" value="Os10g0114500"/>
</dbReference>
<dbReference type="EnsemblPlants" id="Os10t0115200-01">
    <property type="protein sequence ID" value="Os10t0115200-01"/>
    <property type="gene ID" value="Os10g0115200"/>
</dbReference>
<dbReference type="Gramene" id="Os10t0114500-01">
    <property type="protein sequence ID" value="Os10t0114500-01"/>
    <property type="gene ID" value="Os10g0114500"/>
</dbReference>
<dbReference type="Gramene" id="Os10t0115200-01">
    <property type="protein sequence ID" value="Os10t0115200-01"/>
    <property type="gene ID" value="Os10g0115200"/>
</dbReference>
<dbReference type="KEGG" id="dosa:Os10g0115200"/>
<dbReference type="KEGG" id="osa:4347983"/>
<dbReference type="KEGG" id="osa:9268674"/>
<dbReference type="HOGENOM" id="CLU_039119_2_0_1"/>
<dbReference type="InParanoid" id="P0DH89"/>
<dbReference type="OrthoDB" id="1903765at2759"/>
<dbReference type="Proteomes" id="UP000000763">
    <property type="component" value="Chromosome 10"/>
</dbReference>
<dbReference type="Proteomes" id="UP000059680">
    <property type="component" value="Chromosome 10"/>
</dbReference>
<dbReference type="ExpressionAtlas" id="P0DH89">
    <property type="expression patterns" value="baseline"/>
</dbReference>
<dbReference type="GO" id="GO:0005634">
    <property type="term" value="C:nucleus"/>
    <property type="evidence" value="ECO:0007669"/>
    <property type="project" value="UniProtKB-SubCell"/>
</dbReference>
<dbReference type="GO" id="GO:0003677">
    <property type="term" value="F:DNA binding"/>
    <property type="evidence" value="ECO:0007669"/>
    <property type="project" value="UniProtKB-KW"/>
</dbReference>
<dbReference type="InterPro" id="IPR010409">
    <property type="entry name" value="GAGA-bd_tscrpt_act"/>
</dbReference>
<dbReference type="PANTHER" id="PTHR31421">
    <property type="entry name" value="PROTEIN BASIC PENTACYSTEINE3"/>
    <property type="match status" value="1"/>
</dbReference>
<dbReference type="PANTHER" id="PTHR31421:SF22">
    <property type="entry name" value="PROTEIN BASIC PENTACYSTEINE3"/>
    <property type="match status" value="1"/>
</dbReference>
<dbReference type="Pfam" id="PF06217">
    <property type="entry name" value="GAGA_bind"/>
    <property type="match status" value="1"/>
</dbReference>
<dbReference type="SMART" id="SM01226">
    <property type="entry name" value="GAGA_bind"/>
    <property type="match status" value="1"/>
</dbReference>
<comment type="function">
    <text evidence="1">Transcriptional regulator that specifically binds to GA-rich elements (GAGA-repeats) present in regulatory sequences of genes involved in developmental processes.</text>
</comment>
<comment type="subcellular location">
    <subcellularLocation>
        <location evidence="1">Nucleus</location>
    </subcellularLocation>
</comment>
<comment type="similarity">
    <text evidence="3">Belongs to the BBR/BPC family.</text>
</comment>
<comment type="sequence caution" evidence="3">
    <conflict type="erroneous gene model prediction">
        <sequence resource="EMBL-CDS" id="AAK52537"/>
    </conflict>
</comment>
<comment type="sequence caution" evidence="3">
    <conflict type="erroneous gene model prediction">
        <sequence resource="EMBL-CDS" id="AAP51867"/>
    </conflict>
</comment>
<comment type="sequence caution" evidence="3">
    <conflict type="erroneous gene model prediction">
        <sequence resource="EMBL-CDS" id="BAH94736"/>
    </conflict>
</comment>
<reference key="1">
    <citation type="journal article" date="2003" name="Plant J.">
        <title>The GA octodinucleotide repeat binding factor BBR participates in the transcriptional regulation of the homeobox gene Bkn3.</title>
        <authorList>
            <person name="Santi L."/>
            <person name="Wang Y."/>
            <person name="Stile M.R."/>
            <person name="Berendzen K.W."/>
            <person name="Wanke D."/>
            <person name="Roig C."/>
            <person name="Pozzi C."/>
            <person name="Mueller K."/>
            <person name="Mueller J."/>
            <person name="Rohde W."/>
            <person name="Salamini F."/>
        </authorList>
    </citation>
    <scope>NUCLEOTIDE SEQUENCE [GENOMIC DNA / MRNA]</scope>
</reference>
<reference key="2">
    <citation type="journal article" date="2003" name="Science">
        <title>In-depth view of structure, activity, and evolution of rice chromosome 10.</title>
        <authorList>
            <person name="Yu Y."/>
            <person name="Rambo T."/>
            <person name="Currie J."/>
            <person name="Saski C."/>
            <person name="Kim H.-R."/>
            <person name="Collura K."/>
            <person name="Thompson S."/>
            <person name="Simmons J."/>
            <person name="Yang T.-J."/>
            <person name="Nah G."/>
            <person name="Patel A.J."/>
            <person name="Thurmond S."/>
            <person name="Henry D."/>
            <person name="Oates R."/>
            <person name="Palmer M."/>
            <person name="Pries G."/>
            <person name="Gibson J."/>
            <person name="Anderson H."/>
            <person name="Paradkar M."/>
            <person name="Crane L."/>
            <person name="Dale J."/>
            <person name="Carver M.B."/>
            <person name="Wood T."/>
            <person name="Frisch D."/>
            <person name="Engler F."/>
            <person name="Soderlund C."/>
            <person name="Palmer L.E."/>
            <person name="Teytelman L."/>
            <person name="Nascimento L."/>
            <person name="De la Bastide M."/>
            <person name="Spiegel L."/>
            <person name="Ware D."/>
            <person name="O'Shaughnessy A."/>
            <person name="Dike S."/>
            <person name="Dedhia N."/>
            <person name="Preston R."/>
            <person name="Huang E."/>
            <person name="Ferraro K."/>
            <person name="Kuit K."/>
            <person name="Miller B."/>
            <person name="Zutavern T."/>
            <person name="Katzenberger F."/>
            <person name="Muller S."/>
            <person name="Balija V."/>
            <person name="Martienssen R.A."/>
            <person name="Stein L."/>
            <person name="Minx P."/>
            <person name="Johnson D."/>
            <person name="Cordum H."/>
            <person name="Mardis E."/>
            <person name="Cheng Z."/>
            <person name="Jiang J."/>
            <person name="Wilson R."/>
            <person name="McCombie W.R."/>
            <person name="Wing R.A."/>
            <person name="Yuan Q."/>
            <person name="Ouyang S."/>
            <person name="Liu J."/>
            <person name="Jones K.M."/>
            <person name="Gansberger K."/>
            <person name="Moffat K."/>
            <person name="Hill J."/>
            <person name="Tsitrin T."/>
            <person name="Overton L."/>
            <person name="Bera J."/>
            <person name="Kim M."/>
            <person name="Jin S."/>
            <person name="Tallon L."/>
            <person name="Ciecko A."/>
            <person name="Pai G."/>
            <person name="Van Aken S."/>
            <person name="Utterback T."/>
            <person name="Reidmuller S."/>
            <person name="Bormann J."/>
            <person name="Feldblyum T."/>
            <person name="Hsiao J."/>
            <person name="Zismann V."/>
            <person name="Blunt S."/>
            <person name="de Vazeille A.R."/>
            <person name="Shaffer T."/>
            <person name="Koo H."/>
            <person name="Suh B."/>
            <person name="Yang Q."/>
            <person name="Haas B."/>
            <person name="Peterson J."/>
            <person name="Pertea M."/>
            <person name="Volfovsky N."/>
            <person name="Wortman J."/>
            <person name="White O."/>
            <person name="Salzberg S.L."/>
            <person name="Fraser C.M."/>
            <person name="Buell C.R."/>
            <person name="Messing J."/>
            <person name="Song R."/>
            <person name="Fuks G."/>
            <person name="Llaca V."/>
            <person name="Kovchak S."/>
            <person name="Young S."/>
            <person name="Bowers J.E."/>
            <person name="Paterson A.H."/>
            <person name="Johns M.A."/>
            <person name="Mao L."/>
            <person name="Pan H."/>
            <person name="Dean R.A."/>
        </authorList>
    </citation>
    <scope>NUCLEOTIDE SEQUENCE [LARGE SCALE GENOMIC DNA]</scope>
    <source>
        <strain>cv. Nipponbare</strain>
    </source>
</reference>
<reference key="3">
    <citation type="journal article" date="2005" name="Nature">
        <title>The map-based sequence of the rice genome.</title>
        <authorList>
            <consortium name="International rice genome sequencing project (IRGSP)"/>
        </authorList>
    </citation>
    <scope>NUCLEOTIDE SEQUENCE [LARGE SCALE GENOMIC DNA]</scope>
    <source>
        <strain>cv. Nipponbare</strain>
    </source>
</reference>
<reference key="4">
    <citation type="journal article" date="2008" name="Nucleic Acids Res.">
        <title>The rice annotation project database (RAP-DB): 2008 update.</title>
        <authorList>
            <consortium name="The rice annotation project (RAP)"/>
        </authorList>
    </citation>
    <scope>GENOME REANNOTATION</scope>
    <source>
        <strain>cv. Nipponbare</strain>
    </source>
</reference>
<reference key="5">
    <citation type="journal article" date="2013" name="Rice">
        <title>Improvement of the Oryza sativa Nipponbare reference genome using next generation sequence and optical map data.</title>
        <authorList>
            <person name="Kawahara Y."/>
            <person name="de la Bastide M."/>
            <person name="Hamilton J.P."/>
            <person name="Kanamori H."/>
            <person name="McCombie W.R."/>
            <person name="Ouyang S."/>
            <person name="Schwartz D.C."/>
            <person name="Tanaka T."/>
            <person name="Wu J."/>
            <person name="Zhou S."/>
            <person name="Childs K.L."/>
            <person name="Davidson R.M."/>
            <person name="Lin H."/>
            <person name="Quesada-Ocampo L."/>
            <person name="Vaillancourt B."/>
            <person name="Sakai H."/>
            <person name="Lee S.S."/>
            <person name="Kim J."/>
            <person name="Numa H."/>
            <person name="Itoh T."/>
            <person name="Buell C.R."/>
            <person name="Matsumoto T."/>
        </authorList>
    </citation>
    <scope>GENOME REANNOTATION</scope>
    <source>
        <strain>cv. Nipponbare</strain>
    </source>
</reference>
<reference key="6">
    <citation type="journal article" date="2003" name="Science">
        <title>Collection, mapping, and annotation of over 28,000 cDNA clones from japonica rice.</title>
        <authorList>
            <consortium name="The rice full-length cDNA consortium"/>
        </authorList>
    </citation>
    <scope>NUCLEOTIDE SEQUENCE [LARGE SCALE MRNA]</scope>
    <source>
        <strain>cv. Nipponbare</strain>
    </source>
</reference>
<proteinExistence type="evidence at transcript level"/>
<keyword id="KW-0238">DNA-binding</keyword>
<keyword id="KW-0539">Nucleus</keyword>
<keyword id="KW-1185">Reference proteome</keyword>
<keyword id="KW-0804">Transcription</keyword>
<keyword id="KW-0805">Transcription regulation</keyword>
<organism>
    <name type="scientific">Oryza sativa subsp. japonica</name>
    <name type="common">Rice</name>
    <dbReference type="NCBI Taxonomy" id="39947"/>
    <lineage>
        <taxon>Eukaryota</taxon>
        <taxon>Viridiplantae</taxon>
        <taxon>Streptophyta</taxon>
        <taxon>Embryophyta</taxon>
        <taxon>Tracheophyta</taxon>
        <taxon>Spermatophyta</taxon>
        <taxon>Magnoliopsida</taxon>
        <taxon>Liliopsida</taxon>
        <taxon>Poales</taxon>
        <taxon>Poaceae</taxon>
        <taxon>BOP clade</taxon>
        <taxon>Oryzoideae</taxon>
        <taxon>Oryzeae</taxon>
        <taxon>Oryzinae</taxon>
        <taxon>Oryza</taxon>
        <taxon>Oryza sativa</taxon>
    </lineage>
</organism>
<evidence type="ECO:0000250" key="1"/>
<evidence type="ECO:0000256" key="2">
    <source>
        <dbReference type="SAM" id="MobiDB-lite"/>
    </source>
</evidence>
<evidence type="ECO:0000305" key="3"/>
<name>BBRB_ORYSJ</name>
<protein>
    <recommendedName>
        <fullName>Barley B recombinant-like protein B</fullName>
        <shortName>BBR-like protein B</shortName>
    </recommendedName>
    <alternativeName>
        <fullName>GAGA-binding transcriptional activator BBR-B</fullName>
    </alternativeName>
</protein>
<gene>
    <name type="ordered locus">Os10g0115200</name>
    <name type="ordered locus">LOC_Os10g02584</name>
    <name type="ORF">OSJNBa0092N12.5</name>
</gene>
<feature type="chain" id="PRO_0000413444" description="Barley B recombinant-like protein B">
    <location>
        <begin position="1"/>
        <end position="341"/>
    </location>
</feature>
<feature type="region of interest" description="Disordered" evidence="2">
    <location>
        <begin position="48"/>
        <end position="95"/>
    </location>
</feature>
<feature type="region of interest" description="Disordered" evidence="2">
    <location>
        <begin position="150"/>
        <end position="234"/>
    </location>
</feature>
<feature type="compositionally biased region" description="Basic residues" evidence="2">
    <location>
        <begin position="48"/>
        <end position="62"/>
    </location>
</feature>
<feature type="compositionally biased region" description="Low complexity" evidence="2">
    <location>
        <begin position="68"/>
        <end position="77"/>
    </location>
</feature>
<feature type="compositionally biased region" description="Pro residues" evidence="2">
    <location>
        <begin position="78"/>
        <end position="90"/>
    </location>
</feature>
<feature type="compositionally biased region" description="Basic residues" evidence="2">
    <location>
        <begin position="190"/>
        <end position="211"/>
    </location>
</feature>
<accession>P0DH89</accession>
<accession>H2KX85</accession>
<accession>Q6Q0M8</accession>
<accession>Q7G769</accession>
<accession>Q93VZ9</accession>